<keyword id="KW-0004">4Fe-4S</keyword>
<keyword id="KW-0408">Iron</keyword>
<keyword id="KW-0411">Iron-sulfur</keyword>
<keyword id="KW-0479">Metal-binding</keyword>
<keyword id="KW-0560">Oxidoreductase</keyword>
<keyword id="KW-0949">S-adenosyl-L-methionine</keyword>
<organism>
    <name type="scientific">Desulfovibrio desulfuricans (strain ATCC 27774 / DSM 6949 / MB)</name>
    <dbReference type="NCBI Taxonomy" id="525146"/>
    <lineage>
        <taxon>Bacteria</taxon>
        <taxon>Pseudomonadati</taxon>
        <taxon>Thermodesulfobacteriota</taxon>
        <taxon>Desulfovibrionia</taxon>
        <taxon>Desulfovibrionales</taxon>
        <taxon>Desulfovibrionaceae</taxon>
        <taxon>Desulfovibrio</taxon>
    </lineage>
</organism>
<comment type="function">
    <text evidence="5">Involved in an anaerobic respiration pathway that converts the sulfonate isethionate (2-hydroxyethanesulfonate) to ammonia, acetate and sulfide. Catalyzes activation of the isethionate sulfite-lyase IslA under anaerobic conditions by generation of an organic free radical on a glycine residue, via a homolytic cleavage of S-adenosyl-L-methionine (SAM).</text>
</comment>
<comment type="catalytic activity">
    <reaction evidence="8">
        <text>glycyl-[protein] + reduced [flavodoxin] + S-adenosyl-L-methionine = glycin-2-yl radical-[protein] + semiquinone [flavodoxin] + 5'-deoxyadenosine + L-methionine + H(+)</text>
        <dbReference type="Rhea" id="RHEA:61976"/>
        <dbReference type="Rhea" id="RHEA-COMP:10622"/>
        <dbReference type="Rhea" id="RHEA-COMP:14480"/>
        <dbReference type="Rhea" id="RHEA-COMP:15993"/>
        <dbReference type="Rhea" id="RHEA-COMP:15994"/>
        <dbReference type="ChEBI" id="CHEBI:15378"/>
        <dbReference type="ChEBI" id="CHEBI:17319"/>
        <dbReference type="ChEBI" id="CHEBI:29947"/>
        <dbReference type="ChEBI" id="CHEBI:32722"/>
        <dbReference type="ChEBI" id="CHEBI:57618"/>
        <dbReference type="ChEBI" id="CHEBI:57844"/>
        <dbReference type="ChEBI" id="CHEBI:59789"/>
        <dbReference type="ChEBI" id="CHEBI:140311"/>
    </reaction>
    <physiologicalReaction direction="left-to-right" evidence="8">
        <dbReference type="Rhea" id="RHEA:61977"/>
    </physiologicalReaction>
</comment>
<comment type="cofactor">
    <cofactor evidence="3">
        <name>[4Fe-4S] cluster</name>
        <dbReference type="ChEBI" id="CHEBI:49883"/>
    </cofactor>
    <text evidence="3">Binds 3 [4Fe-4S] clusters. One cluster is coordinated with 3 cysteines and an exchangeable S-adenosyl-L-methionine.</text>
</comment>
<comment type="pathway">
    <text evidence="8">Organosulfur degradation; alkanesulfonate degradation.</text>
</comment>
<comment type="subunit">
    <text evidence="2">Monomer.</text>
</comment>
<comment type="induction">
    <text evidence="5">Highly up-regulated in the presence of isethionate.</text>
</comment>
<comment type="similarity">
    <text evidence="7">Belongs to the organic radical-activating enzymes family.</text>
</comment>
<feature type="chain" id="PRO_0000450947" description="Isethionate sulfite-lyase activating enzyme">
    <location>
        <begin position="1"/>
        <end position="312"/>
    </location>
</feature>
<feature type="domain" description="Radical SAM core" evidence="4">
    <location>
        <begin position="20"/>
        <end position="304"/>
    </location>
</feature>
<feature type="domain" description="4Fe-4S ferredoxin-type 1" evidence="3">
    <location>
        <begin position="51"/>
        <end position="83"/>
    </location>
</feature>
<feature type="domain" description="4Fe-4S ferredoxin-type 2" evidence="3">
    <location>
        <begin position="84"/>
        <end position="115"/>
    </location>
</feature>
<feature type="binding site" evidence="4">
    <location>
        <position position="34"/>
    </location>
    <ligand>
        <name>[4Fe-4S] cluster</name>
        <dbReference type="ChEBI" id="CHEBI:49883"/>
        <label>1</label>
        <note>4Fe-4S-S-AdoMet</note>
    </ligand>
</feature>
<feature type="binding site" evidence="4">
    <location>
        <position position="38"/>
    </location>
    <ligand>
        <name>[4Fe-4S] cluster</name>
        <dbReference type="ChEBI" id="CHEBI:49883"/>
        <label>1</label>
        <note>4Fe-4S-S-AdoMet</note>
    </ligand>
</feature>
<feature type="binding site" evidence="1">
    <location>
        <begin position="40"/>
        <end position="42"/>
    </location>
    <ligand>
        <name>S-adenosyl-L-methionine</name>
        <dbReference type="ChEBI" id="CHEBI:59789"/>
    </ligand>
</feature>
<feature type="binding site" evidence="4">
    <location>
        <position position="41"/>
    </location>
    <ligand>
        <name>[4Fe-4S] cluster</name>
        <dbReference type="ChEBI" id="CHEBI:49883"/>
        <label>1</label>
        <note>4Fe-4S-S-AdoMet</note>
    </ligand>
</feature>
<feature type="binding site" evidence="3">
    <location>
        <position position="60"/>
    </location>
    <ligand>
        <name>[4Fe-4S] cluster</name>
        <dbReference type="ChEBI" id="CHEBI:49883"/>
        <label>2</label>
    </ligand>
</feature>
<feature type="binding site" evidence="3">
    <location>
        <position position="66"/>
    </location>
    <ligand>
        <name>[4Fe-4S] cluster</name>
        <dbReference type="ChEBI" id="CHEBI:49883"/>
        <label>2</label>
    </ligand>
</feature>
<feature type="binding site" evidence="3">
    <location>
        <position position="69"/>
    </location>
    <ligand>
        <name>[4Fe-4S] cluster</name>
        <dbReference type="ChEBI" id="CHEBI:49883"/>
        <label>2</label>
    </ligand>
</feature>
<feature type="binding site" evidence="3">
    <location>
        <position position="73"/>
    </location>
    <ligand>
        <name>[4Fe-4S] cluster</name>
        <dbReference type="ChEBI" id="CHEBI:49883"/>
        <label>3</label>
    </ligand>
</feature>
<feature type="binding site" evidence="3">
    <location>
        <position position="93"/>
    </location>
    <ligand>
        <name>[4Fe-4S] cluster</name>
        <dbReference type="ChEBI" id="CHEBI:49883"/>
        <label>3</label>
    </ligand>
</feature>
<feature type="binding site" evidence="3">
    <location>
        <position position="96"/>
    </location>
    <ligand>
        <name>[4Fe-4S] cluster</name>
        <dbReference type="ChEBI" id="CHEBI:49883"/>
        <label>3</label>
    </ligand>
</feature>
<feature type="binding site" evidence="3">
    <location>
        <position position="100"/>
    </location>
    <ligand>
        <name>[4Fe-4S] cluster</name>
        <dbReference type="ChEBI" id="CHEBI:49883"/>
        <label>3</label>
    </ligand>
</feature>
<feature type="binding site" evidence="3">
    <location>
        <position position="104"/>
    </location>
    <ligand>
        <name>[4Fe-4S] cluster</name>
        <dbReference type="ChEBI" id="CHEBI:49883"/>
        <label>2</label>
    </ligand>
</feature>
<feature type="binding site" evidence="1">
    <location>
        <position position="144"/>
    </location>
    <ligand>
        <name>S-adenosyl-L-methionine</name>
        <dbReference type="ChEBI" id="CHEBI:59789"/>
    </ligand>
</feature>
<feature type="binding site" evidence="1">
    <location>
        <begin position="193"/>
        <end position="195"/>
    </location>
    <ligand>
        <name>S-adenosyl-L-methionine</name>
        <dbReference type="ChEBI" id="CHEBI:59789"/>
    </ligand>
</feature>
<feature type="binding site" evidence="1">
    <location>
        <position position="267"/>
    </location>
    <ligand>
        <name>S-adenosyl-L-methionine</name>
        <dbReference type="ChEBI" id="CHEBI:59789"/>
    </ligand>
</feature>
<name>ISLB_DESDA</name>
<protein>
    <recommendedName>
        <fullName evidence="8">Isethionate sulfite-lyase activating enzyme</fullName>
        <ecNumber evidence="8">1.97.1.-</ecNumber>
    </recommendedName>
    <alternativeName>
        <fullName evidence="6">GRE activase IslB</fullName>
    </alternativeName>
    <alternativeName>
        <fullName>Glycyl-radical enzyme activating enzyme IslB</fullName>
    </alternativeName>
</protein>
<reference key="1">
    <citation type="submission" date="2009-01" db="EMBL/GenBank/DDBJ databases">
        <title>Complete sequence of Desulfovibrio desulfuricans subsp. desulfuricans str. ATCC 27774.</title>
        <authorList>
            <consortium name="US DOE Joint Genome Institute"/>
            <person name="Lucas S."/>
            <person name="Copeland A."/>
            <person name="Lapidus A."/>
            <person name="Glavina del Rio T."/>
            <person name="Tice H."/>
            <person name="Bruce D."/>
            <person name="Goodwin L."/>
            <person name="Pitluck S."/>
            <person name="Sims D."/>
            <person name="Lu M."/>
            <person name="Kiss H."/>
            <person name="Meineke L."/>
            <person name="Brettin T."/>
            <person name="Detter J.C."/>
            <person name="Han C."/>
            <person name="Larimer F."/>
            <person name="Land M."/>
            <person name="Hauser L."/>
            <person name="Kyrpides N."/>
            <person name="Ovchinnikova G."/>
            <person name="Hazen T.C."/>
        </authorList>
    </citation>
    <scope>NUCLEOTIDE SEQUENCE [LARGE SCALE GENOMIC DNA]</scope>
    <source>
        <strain>ATCC 27774 / DSM 6949 / MB</strain>
    </source>
</reference>
<reference key="2">
    <citation type="journal article" date="2019" name="Proc. Natl. Acad. Sci. U.S.A.">
        <title>A glycyl radical enzyme enables hydrogen sulfide production by the human intestinal bacterium Bilophila wadsworthia.</title>
        <authorList>
            <person name="Peck S.C."/>
            <person name="Denger K."/>
            <person name="Burrichter A."/>
            <person name="Irwin S.M."/>
            <person name="Balskus E.P."/>
            <person name="Schleheck D."/>
        </authorList>
    </citation>
    <scope>FUNCTION</scope>
    <scope>CATALYTIC ACTIVITY</scope>
    <scope>INDUCTION</scope>
    <scope>PATHWAY</scope>
    <source>
        <strain>DSM 642</strain>
    </source>
</reference>
<dbReference type="EC" id="1.97.1.-" evidence="8"/>
<dbReference type="EMBL" id="CP001358">
    <property type="protein sequence ID" value="ACL49337.1"/>
    <property type="molecule type" value="Genomic_DNA"/>
</dbReference>
<dbReference type="SMR" id="B8J0R0"/>
<dbReference type="STRING" id="525146.Ddes_1435"/>
<dbReference type="KEGG" id="dds:Ddes_1435"/>
<dbReference type="eggNOG" id="COG1180">
    <property type="taxonomic scope" value="Bacteria"/>
</dbReference>
<dbReference type="HOGENOM" id="CLU_058969_0_0_7"/>
<dbReference type="UniPathway" id="UPA00338"/>
<dbReference type="GO" id="GO:0051539">
    <property type="term" value="F:4 iron, 4 sulfur cluster binding"/>
    <property type="evidence" value="ECO:0007669"/>
    <property type="project" value="UniProtKB-KW"/>
</dbReference>
<dbReference type="GO" id="GO:0046872">
    <property type="term" value="F:metal ion binding"/>
    <property type="evidence" value="ECO:0007669"/>
    <property type="project" value="UniProtKB-KW"/>
</dbReference>
<dbReference type="GO" id="GO:0016491">
    <property type="term" value="F:oxidoreductase activity"/>
    <property type="evidence" value="ECO:0007669"/>
    <property type="project" value="UniProtKB-KW"/>
</dbReference>
<dbReference type="GO" id="GO:0046306">
    <property type="term" value="P:alkanesulfonate catabolic process"/>
    <property type="evidence" value="ECO:0007669"/>
    <property type="project" value="UniProtKB-UniPathway"/>
</dbReference>
<dbReference type="Gene3D" id="3.30.70.20">
    <property type="match status" value="1"/>
</dbReference>
<dbReference type="Gene3D" id="3.80.30.10">
    <property type="entry name" value="pyruvate-formate lyase- activating enzyme"/>
    <property type="match status" value="1"/>
</dbReference>
<dbReference type="InterPro" id="IPR017896">
    <property type="entry name" value="4Fe4S_Fe-S-bd"/>
</dbReference>
<dbReference type="InterPro" id="IPR040074">
    <property type="entry name" value="BssD/PflA/YjjW"/>
</dbReference>
<dbReference type="InterPro" id="IPR034457">
    <property type="entry name" value="Organic_radical-activating"/>
</dbReference>
<dbReference type="InterPro" id="IPR012839">
    <property type="entry name" value="Organic_radical_activase"/>
</dbReference>
<dbReference type="InterPro" id="IPR001989">
    <property type="entry name" value="Radical_activat_CS"/>
</dbReference>
<dbReference type="InterPro" id="IPR007197">
    <property type="entry name" value="rSAM"/>
</dbReference>
<dbReference type="NCBIfam" id="TIGR02494">
    <property type="entry name" value="PFLE_PFLC"/>
    <property type="match status" value="1"/>
</dbReference>
<dbReference type="PANTHER" id="PTHR30352:SF4">
    <property type="entry name" value="PYRUVATE FORMATE-LYASE 2-ACTIVATING ENZYME"/>
    <property type="match status" value="1"/>
</dbReference>
<dbReference type="PANTHER" id="PTHR30352">
    <property type="entry name" value="PYRUVATE FORMATE-LYASE-ACTIVATING ENZYME"/>
    <property type="match status" value="1"/>
</dbReference>
<dbReference type="Pfam" id="PF13353">
    <property type="entry name" value="Fer4_12"/>
    <property type="match status" value="1"/>
</dbReference>
<dbReference type="Pfam" id="PF04055">
    <property type="entry name" value="Radical_SAM"/>
    <property type="match status" value="1"/>
</dbReference>
<dbReference type="PIRSF" id="PIRSF000371">
    <property type="entry name" value="PFL_act_enz"/>
    <property type="match status" value="1"/>
</dbReference>
<dbReference type="SFLD" id="SFLDG01118">
    <property type="entry name" value="activating_enzymes__group_2"/>
    <property type="match status" value="1"/>
</dbReference>
<dbReference type="SFLD" id="SFLDS00029">
    <property type="entry name" value="Radical_SAM"/>
    <property type="match status" value="1"/>
</dbReference>
<dbReference type="SUPFAM" id="SSF54862">
    <property type="entry name" value="4Fe-4S ferredoxins"/>
    <property type="match status" value="1"/>
</dbReference>
<dbReference type="SUPFAM" id="SSF102114">
    <property type="entry name" value="Radical SAM enzymes"/>
    <property type="match status" value="1"/>
</dbReference>
<dbReference type="PROSITE" id="PS51379">
    <property type="entry name" value="4FE4S_FER_2"/>
    <property type="match status" value="2"/>
</dbReference>
<dbReference type="PROSITE" id="PS01087">
    <property type="entry name" value="RADICAL_ACTIVATING"/>
    <property type="match status" value="1"/>
</dbReference>
<dbReference type="PROSITE" id="PS51918">
    <property type="entry name" value="RADICAL_SAM"/>
    <property type="match status" value="1"/>
</dbReference>
<gene>
    <name evidence="6" type="primary">islB</name>
    <name evidence="9" type="ordered locus">Ddes_1435</name>
</gene>
<accession>B8J0R0</accession>
<sequence>MCLDDKQQGMVFNIQKYSVHDGPGIRTIVFLKGCSLSCRWCSNPESQKSCAELACNPGRCIDISKCGHCLTACPHGAITCGDDDKPRIDRSHCADCSIPCAEVCPAQGLLVYGKKRAVGDVLRVVEQDMAFYARSGGGLTLSGGEPLLQGSFAVALLREARARRIRTAVETCGMVPADTVREAAPHLSYVLYDIKHMNSEIHETQTGLPNARILENFRILAEEFPHLPILARTPVIPGFNDNEKAVAAIARFIKAYPHVNYELLPYHRLGTQKYHFLGREVPMGEVSLNKAVTDGLQKTALDILGERVQIPR</sequence>
<evidence type="ECO:0000250" key="1">
    <source>
        <dbReference type="UniProtKB" id="P0A9N4"/>
    </source>
</evidence>
<evidence type="ECO:0000250" key="2">
    <source>
        <dbReference type="UniProtKB" id="Q30W71"/>
    </source>
</evidence>
<evidence type="ECO:0000255" key="3">
    <source>
        <dbReference type="PROSITE-ProRule" id="PRU00711"/>
    </source>
</evidence>
<evidence type="ECO:0000255" key="4">
    <source>
        <dbReference type="PROSITE-ProRule" id="PRU01266"/>
    </source>
</evidence>
<evidence type="ECO:0000269" key="5">
    <source>
    </source>
</evidence>
<evidence type="ECO:0000303" key="6">
    <source>
    </source>
</evidence>
<evidence type="ECO:0000305" key="7"/>
<evidence type="ECO:0000305" key="8">
    <source>
    </source>
</evidence>
<evidence type="ECO:0000312" key="9">
    <source>
        <dbReference type="EMBL" id="ACL49337.1"/>
    </source>
</evidence>
<proteinExistence type="evidence at protein level"/>